<protein>
    <recommendedName>
        <fullName>Mannose-1-phosphate guanyltransferase</fullName>
        <ecNumber>2.7.7.13</ecNumber>
    </recommendedName>
    <alternativeName>
        <fullName>GDP-mannose pyrophosphorylase</fullName>
    </alternativeName>
    <alternativeName>
        <fullName>GTP-mannose-1-phosphate guanylyltransferase</fullName>
    </alternativeName>
</protein>
<gene>
    <name type="primary">mpg-1</name>
    <name type="ORF">NCU06003</name>
</gene>
<reference key="1">
    <citation type="journal article" date="2003" name="Nature">
        <title>The genome sequence of the filamentous fungus Neurospora crassa.</title>
        <authorList>
            <person name="Galagan J.E."/>
            <person name="Calvo S.E."/>
            <person name="Borkovich K.A."/>
            <person name="Selker E.U."/>
            <person name="Read N.D."/>
            <person name="Jaffe D.B."/>
            <person name="FitzHugh W."/>
            <person name="Ma L.-J."/>
            <person name="Smirnov S."/>
            <person name="Purcell S."/>
            <person name="Rehman B."/>
            <person name="Elkins T."/>
            <person name="Engels R."/>
            <person name="Wang S."/>
            <person name="Nielsen C.B."/>
            <person name="Butler J."/>
            <person name="Endrizzi M."/>
            <person name="Qui D."/>
            <person name="Ianakiev P."/>
            <person name="Bell-Pedersen D."/>
            <person name="Nelson M.A."/>
            <person name="Werner-Washburne M."/>
            <person name="Selitrennikoff C.P."/>
            <person name="Kinsey J.A."/>
            <person name="Braun E.L."/>
            <person name="Zelter A."/>
            <person name="Schulte U."/>
            <person name="Kothe G.O."/>
            <person name="Jedd G."/>
            <person name="Mewes H.-W."/>
            <person name="Staben C."/>
            <person name="Marcotte E."/>
            <person name="Greenberg D."/>
            <person name="Roy A."/>
            <person name="Foley K."/>
            <person name="Naylor J."/>
            <person name="Stange-Thomann N."/>
            <person name="Barrett R."/>
            <person name="Gnerre S."/>
            <person name="Kamal M."/>
            <person name="Kamvysselis M."/>
            <person name="Mauceli E.W."/>
            <person name="Bielke C."/>
            <person name="Rudd S."/>
            <person name="Frishman D."/>
            <person name="Krystofova S."/>
            <person name="Rasmussen C."/>
            <person name="Metzenberg R.L."/>
            <person name="Perkins D.D."/>
            <person name="Kroken S."/>
            <person name="Cogoni C."/>
            <person name="Macino G."/>
            <person name="Catcheside D.E.A."/>
            <person name="Li W."/>
            <person name="Pratt R.J."/>
            <person name="Osmani S.A."/>
            <person name="DeSouza C.P.C."/>
            <person name="Glass N.L."/>
            <person name="Orbach M.J."/>
            <person name="Berglund J.A."/>
            <person name="Voelker R."/>
            <person name="Yarden O."/>
            <person name="Plamann M."/>
            <person name="Seiler S."/>
            <person name="Dunlap J.C."/>
            <person name="Radford A."/>
            <person name="Aramayo R."/>
            <person name="Natvig D.O."/>
            <person name="Alex L.A."/>
            <person name="Mannhaupt G."/>
            <person name="Ebbole D.J."/>
            <person name="Freitag M."/>
            <person name="Paulsen I."/>
            <person name="Sachs M.S."/>
            <person name="Lander E.S."/>
            <person name="Nusbaum C."/>
            <person name="Birren B.W."/>
        </authorList>
    </citation>
    <scope>NUCLEOTIDE SEQUENCE [LARGE SCALE GENOMIC DNA]</scope>
    <source>
        <strain>ATCC 24698 / 74-OR23-1A / CBS 708.71 / DSM 1257 / FGSC 987</strain>
    </source>
</reference>
<organism>
    <name type="scientific">Neurospora crassa (strain ATCC 24698 / 74-OR23-1A / CBS 708.71 / DSM 1257 / FGSC 987)</name>
    <dbReference type="NCBI Taxonomy" id="367110"/>
    <lineage>
        <taxon>Eukaryota</taxon>
        <taxon>Fungi</taxon>
        <taxon>Dikarya</taxon>
        <taxon>Ascomycota</taxon>
        <taxon>Pezizomycotina</taxon>
        <taxon>Sordariomycetes</taxon>
        <taxon>Sordariomycetidae</taxon>
        <taxon>Sordariales</taxon>
        <taxon>Sordariaceae</taxon>
        <taxon>Neurospora</taxon>
    </lineage>
</organism>
<keyword id="KW-0131">Cell cycle</keyword>
<keyword id="KW-0963">Cytoplasm</keyword>
<keyword id="KW-0342">GTP-binding</keyword>
<keyword id="KW-0547">Nucleotide-binding</keyword>
<keyword id="KW-0548">Nucleotidyltransferase</keyword>
<keyword id="KW-1185">Reference proteome</keyword>
<keyword id="KW-0808">Transferase</keyword>
<accession>Q7RVR8</accession>
<dbReference type="EC" id="2.7.7.13"/>
<dbReference type="EMBL" id="CM002241">
    <property type="protein sequence ID" value="EAA29575.1"/>
    <property type="molecule type" value="Genomic_DNA"/>
</dbReference>
<dbReference type="RefSeq" id="XP_958811.1">
    <property type="nucleotide sequence ID" value="XM_953718.2"/>
</dbReference>
<dbReference type="SMR" id="Q7RVR8"/>
<dbReference type="FunCoup" id="Q7RVR8">
    <property type="interactions" value="1234"/>
</dbReference>
<dbReference type="STRING" id="367110.Q7RVR8"/>
<dbReference type="PaxDb" id="5141-EFNCRP00000001477"/>
<dbReference type="EnsemblFungi" id="EAA29575">
    <property type="protein sequence ID" value="EAA29575"/>
    <property type="gene ID" value="NCU06003"/>
</dbReference>
<dbReference type="GeneID" id="23568451"/>
<dbReference type="KEGG" id="ncr:NCU06003"/>
<dbReference type="VEuPathDB" id="FungiDB:NCU06003"/>
<dbReference type="HOGENOM" id="CLU_029499_0_0_1"/>
<dbReference type="InParanoid" id="Q7RVR8"/>
<dbReference type="OrthoDB" id="1733332at2759"/>
<dbReference type="UniPathway" id="UPA00126">
    <property type="reaction ID" value="UER00930"/>
</dbReference>
<dbReference type="Proteomes" id="UP000001805">
    <property type="component" value="Chromosome 5, Linkage Group VI"/>
</dbReference>
<dbReference type="GO" id="GO:0005737">
    <property type="term" value="C:cytoplasm"/>
    <property type="evidence" value="ECO:0000318"/>
    <property type="project" value="GO_Central"/>
</dbReference>
<dbReference type="GO" id="GO:0005525">
    <property type="term" value="F:GTP binding"/>
    <property type="evidence" value="ECO:0007669"/>
    <property type="project" value="UniProtKB-KW"/>
</dbReference>
<dbReference type="GO" id="GO:0004475">
    <property type="term" value="F:mannose-1-phosphate guanylyltransferase (GTP) activity"/>
    <property type="evidence" value="ECO:0000318"/>
    <property type="project" value="GO_Central"/>
</dbReference>
<dbReference type="GO" id="GO:0000032">
    <property type="term" value="P:cell wall mannoprotein biosynthetic process"/>
    <property type="evidence" value="ECO:0007669"/>
    <property type="project" value="EnsemblFungi"/>
</dbReference>
<dbReference type="GO" id="GO:0009298">
    <property type="term" value="P:GDP-mannose biosynthetic process"/>
    <property type="evidence" value="ECO:0000318"/>
    <property type="project" value="GO_Central"/>
</dbReference>
<dbReference type="GO" id="GO:0006486">
    <property type="term" value="P:protein glycosylation"/>
    <property type="evidence" value="ECO:0000318"/>
    <property type="project" value="GO_Central"/>
</dbReference>
<dbReference type="CDD" id="cd05824">
    <property type="entry name" value="LbH_M1P_guanylylT_C"/>
    <property type="match status" value="1"/>
</dbReference>
<dbReference type="CDD" id="cd06425">
    <property type="entry name" value="M1P_guanylylT_B_like_N"/>
    <property type="match status" value="1"/>
</dbReference>
<dbReference type="FunFam" id="2.160.10.10:FF:000017">
    <property type="entry name" value="Mannose-1-phosphate guanyltransferase"/>
    <property type="match status" value="1"/>
</dbReference>
<dbReference type="FunFam" id="3.90.550.10:FF:000013">
    <property type="entry name" value="mannose-1-phosphate guanyltransferase beta"/>
    <property type="match status" value="1"/>
</dbReference>
<dbReference type="Gene3D" id="2.160.10.10">
    <property type="entry name" value="Hexapeptide repeat proteins"/>
    <property type="match status" value="1"/>
</dbReference>
<dbReference type="Gene3D" id="3.90.550.10">
    <property type="entry name" value="Spore Coat Polysaccharide Biosynthesis Protein SpsA, Chain A"/>
    <property type="match status" value="1"/>
</dbReference>
<dbReference type="InterPro" id="IPR056729">
    <property type="entry name" value="GMPPB_C"/>
</dbReference>
<dbReference type="InterPro" id="IPR045233">
    <property type="entry name" value="GMPPB_N"/>
</dbReference>
<dbReference type="InterPro" id="IPR018357">
    <property type="entry name" value="Hexapep_transf_CS"/>
</dbReference>
<dbReference type="InterPro" id="IPR050486">
    <property type="entry name" value="Mannose-1P_guanyltransferase"/>
</dbReference>
<dbReference type="InterPro" id="IPR005835">
    <property type="entry name" value="NTP_transferase_dom"/>
</dbReference>
<dbReference type="InterPro" id="IPR029044">
    <property type="entry name" value="Nucleotide-diphossugar_trans"/>
</dbReference>
<dbReference type="PANTHER" id="PTHR22572">
    <property type="entry name" value="SUGAR-1-PHOSPHATE GUANYL TRANSFERASE"/>
    <property type="match status" value="1"/>
</dbReference>
<dbReference type="Pfam" id="PF25087">
    <property type="entry name" value="GMPPB_C"/>
    <property type="match status" value="1"/>
</dbReference>
<dbReference type="Pfam" id="PF00483">
    <property type="entry name" value="NTP_transferase"/>
    <property type="match status" value="1"/>
</dbReference>
<dbReference type="SUPFAM" id="SSF53448">
    <property type="entry name" value="Nucleotide-diphospho-sugar transferases"/>
    <property type="match status" value="1"/>
</dbReference>
<dbReference type="PROSITE" id="PS00101">
    <property type="entry name" value="HEXAPEP_TRANSFERASES"/>
    <property type="match status" value="2"/>
</dbReference>
<feature type="chain" id="PRO_0000238491" description="Mannose-1-phosphate guanyltransferase">
    <location>
        <begin position="1"/>
        <end position="364"/>
    </location>
</feature>
<name>MPG1_NEUCR</name>
<proteinExistence type="inferred from homology"/>
<comment type="function">
    <text evidence="1">Involved in cell wall synthesis where it is required for glycosylation. Involved in cell cycle progression through cell-size checkpoint (By similarity).</text>
</comment>
<comment type="catalytic activity">
    <reaction>
        <text>alpha-D-mannose 1-phosphate + GTP + H(+) = GDP-alpha-D-mannose + diphosphate</text>
        <dbReference type="Rhea" id="RHEA:15229"/>
        <dbReference type="ChEBI" id="CHEBI:15378"/>
        <dbReference type="ChEBI" id="CHEBI:33019"/>
        <dbReference type="ChEBI" id="CHEBI:37565"/>
        <dbReference type="ChEBI" id="CHEBI:57527"/>
        <dbReference type="ChEBI" id="CHEBI:58409"/>
        <dbReference type="EC" id="2.7.7.13"/>
    </reaction>
</comment>
<comment type="pathway">
    <text>Nucleotide-sugar biosynthesis; GDP-alpha-D-mannose biosynthesis; GDP-alpha-D-mannose from alpha-D-mannose 1-phosphate (GTP route): step 1/1.</text>
</comment>
<comment type="subcellular location">
    <subcellularLocation>
        <location evidence="1">Cytoplasm</location>
    </subcellularLocation>
</comment>
<comment type="similarity">
    <text evidence="2">Belongs to the transferase hexapeptide repeat family.</text>
</comment>
<sequence>MKALILVGGFGTRLRPLTLTMPKPLVEFGNKRMILHQIEALAAAGVTDIVLAVNYRPEIMEKYLAEYEKQFGINITISIESEPLGTAGPLKLAEDVLRKDDTPFFVLNSDVTCEYPFKELAAFHKAHGDEGTIVVTKVEEPSKYGVVVHKPNHPSRIDRFVEKPVQFVGNRINAGLYIFNPSVIDRVELRPTSIEQETFPAMVRDGQLHSFDLEGFWMDIGQPKDFLTGTCLYLSSLTKKGSKELAPTTLPYIHGGNVLIDPSAKIGKNCRIGPNVTIGPNVVVGDGVRLQRCVLLEGSKVKDHAWVKSTIVGWNSTVGKWARLENVTVLGDDVTIGDEIYVNGGSILPHKTIKANVDVPAIIM</sequence>
<evidence type="ECO:0000250" key="1"/>
<evidence type="ECO:0000305" key="2"/>